<evidence type="ECO:0000255" key="1">
    <source>
        <dbReference type="HAMAP-Rule" id="MF_00183"/>
    </source>
</evidence>
<feature type="chain" id="PRO_0000163637" description="1-deoxy-D-xylulose 5-phosphate reductoisomerase">
    <location>
        <begin position="1"/>
        <end position="384"/>
    </location>
</feature>
<feature type="binding site" evidence="1">
    <location>
        <position position="10"/>
    </location>
    <ligand>
        <name>NADPH</name>
        <dbReference type="ChEBI" id="CHEBI:57783"/>
    </ligand>
</feature>
<feature type="binding site" evidence="1">
    <location>
        <position position="11"/>
    </location>
    <ligand>
        <name>NADPH</name>
        <dbReference type="ChEBI" id="CHEBI:57783"/>
    </ligand>
</feature>
<feature type="binding site" evidence="1">
    <location>
        <position position="12"/>
    </location>
    <ligand>
        <name>NADPH</name>
        <dbReference type="ChEBI" id="CHEBI:57783"/>
    </ligand>
</feature>
<feature type="binding site" evidence="1">
    <location>
        <position position="13"/>
    </location>
    <ligand>
        <name>NADPH</name>
        <dbReference type="ChEBI" id="CHEBI:57783"/>
    </ligand>
</feature>
<feature type="binding site" evidence="1">
    <location>
        <position position="37"/>
    </location>
    <ligand>
        <name>NADPH</name>
        <dbReference type="ChEBI" id="CHEBI:57783"/>
    </ligand>
</feature>
<feature type="binding site" evidence="1">
    <location>
        <position position="38"/>
    </location>
    <ligand>
        <name>NADPH</name>
        <dbReference type="ChEBI" id="CHEBI:57783"/>
    </ligand>
</feature>
<feature type="binding site" evidence="1">
    <location>
        <position position="124"/>
    </location>
    <ligand>
        <name>NADPH</name>
        <dbReference type="ChEBI" id="CHEBI:57783"/>
    </ligand>
</feature>
<feature type="binding site" evidence="1">
    <location>
        <position position="125"/>
    </location>
    <ligand>
        <name>1-deoxy-D-xylulose 5-phosphate</name>
        <dbReference type="ChEBI" id="CHEBI:57792"/>
    </ligand>
</feature>
<feature type="binding site" evidence="1">
    <location>
        <position position="126"/>
    </location>
    <ligand>
        <name>NADPH</name>
        <dbReference type="ChEBI" id="CHEBI:57783"/>
    </ligand>
</feature>
<feature type="binding site" evidence="1">
    <location>
        <position position="150"/>
    </location>
    <ligand>
        <name>Mn(2+)</name>
        <dbReference type="ChEBI" id="CHEBI:29035"/>
    </ligand>
</feature>
<feature type="binding site" evidence="1">
    <location>
        <position position="151"/>
    </location>
    <ligand>
        <name>1-deoxy-D-xylulose 5-phosphate</name>
        <dbReference type="ChEBI" id="CHEBI:57792"/>
    </ligand>
</feature>
<feature type="binding site" evidence="1">
    <location>
        <position position="152"/>
    </location>
    <ligand>
        <name>1-deoxy-D-xylulose 5-phosphate</name>
        <dbReference type="ChEBI" id="CHEBI:57792"/>
    </ligand>
</feature>
<feature type="binding site" evidence="1">
    <location>
        <position position="152"/>
    </location>
    <ligand>
        <name>Mn(2+)</name>
        <dbReference type="ChEBI" id="CHEBI:29035"/>
    </ligand>
</feature>
<feature type="binding site" evidence="1">
    <location>
        <position position="176"/>
    </location>
    <ligand>
        <name>1-deoxy-D-xylulose 5-phosphate</name>
        <dbReference type="ChEBI" id="CHEBI:57792"/>
    </ligand>
</feature>
<feature type="binding site" evidence="1">
    <location>
        <position position="199"/>
    </location>
    <ligand>
        <name>1-deoxy-D-xylulose 5-phosphate</name>
        <dbReference type="ChEBI" id="CHEBI:57792"/>
    </ligand>
</feature>
<feature type="binding site" evidence="1">
    <location>
        <position position="205"/>
    </location>
    <ligand>
        <name>NADPH</name>
        <dbReference type="ChEBI" id="CHEBI:57783"/>
    </ligand>
</feature>
<feature type="binding site" evidence="1">
    <location>
        <position position="212"/>
    </location>
    <ligand>
        <name>1-deoxy-D-xylulose 5-phosphate</name>
        <dbReference type="ChEBI" id="CHEBI:57792"/>
    </ligand>
</feature>
<feature type="binding site" evidence="1">
    <location>
        <position position="217"/>
    </location>
    <ligand>
        <name>1-deoxy-D-xylulose 5-phosphate</name>
        <dbReference type="ChEBI" id="CHEBI:57792"/>
    </ligand>
</feature>
<feature type="binding site" evidence="1">
    <location>
        <position position="218"/>
    </location>
    <ligand>
        <name>1-deoxy-D-xylulose 5-phosphate</name>
        <dbReference type="ChEBI" id="CHEBI:57792"/>
    </ligand>
</feature>
<feature type="binding site" evidence="1">
    <location>
        <position position="221"/>
    </location>
    <ligand>
        <name>1-deoxy-D-xylulose 5-phosphate</name>
        <dbReference type="ChEBI" id="CHEBI:57792"/>
    </ligand>
</feature>
<feature type="binding site" evidence="1">
    <location>
        <position position="221"/>
    </location>
    <ligand>
        <name>Mn(2+)</name>
        <dbReference type="ChEBI" id="CHEBI:29035"/>
    </ligand>
</feature>
<accession>Q8XJR1</accession>
<comment type="function">
    <text evidence="1">Catalyzes the NADPH-dependent rearrangement and reduction of 1-deoxy-D-xylulose-5-phosphate (DXP) to 2-C-methyl-D-erythritol 4-phosphate (MEP).</text>
</comment>
<comment type="catalytic activity">
    <reaction evidence="1">
        <text>2-C-methyl-D-erythritol 4-phosphate + NADP(+) = 1-deoxy-D-xylulose 5-phosphate + NADPH + H(+)</text>
        <dbReference type="Rhea" id="RHEA:13717"/>
        <dbReference type="ChEBI" id="CHEBI:15378"/>
        <dbReference type="ChEBI" id="CHEBI:57783"/>
        <dbReference type="ChEBI" id="CHEBI:57792"/>
        <dbReference type="ChEBI" id="CHEBI:58262"/>
        <dbReference type="ChEBI" id="CHEBI:58349"/>
        <dbReference type="EC" id="1.1.1.267"/>
    </reaction>
    <physiologicalReaction direction="right-to-left" evidence="1">
        <dbReference type="Rhea" id="RHEA:13719"/>
    </physiologicalReaction>
</comment>
<comment type="cofactor">
    <cofactor evidence="1">
        <name>Mg(2+)</name>
        <dbReference type="ChEBI" id="CHEBI:18420"/>
    </cofactor>
    <cofactor evidence="1">
        <name>Mn(2+)</name>
        <dbReference type="ChEBI" id="CHEBI:29035"/>
    </cofactor>
</comment>
<comment type="pathway">
    <text evidence="1">Isoprenoid biosynthesis; isopentenyl diphosphate biosynthesis via DXP pathway; isopentenyl diphosphate from 1-deoxy-D-xylulose 5-phosphate: step 1/6.</text>
</comment>
<comment type="similarity">
    <text evidence="1">Belongs to the DXR family.</text>
</comment>
<name>DXR_CLOPE</name>
<keyword id="KW-0414">Isoprene biosynthesis</keyword>
<keyword id="KW-0464">Manganese</keyword>
<keyword id="KW-0479">Metal-binding</keyword>
<keyword id="KW-0521">NADP</keyword>
<keyword id="KW-0560">Oxidoreductase</keyword>
<keyword id="KW-1185">Reference proteome</keyword>
<organism>
    <name type="scientific">Clostridium perfringens (strain 13 / Type A)</name>
    <dbReference type="NCBI Taxonomy" id="195102"/>
    <lineage>
        <taxon>Bacteria</taxon>
        <taxon>Bacillati</taxon>
        <taxon>Bacillota</taxon>
        <taxon>Clostridia</taxon>
        <taxon>Eubacteriales</taxon>
        <taxon>Clostridiaceae</taxon>
        <taxon>Clostridium</taxon>
    </lineage>
</organism>
<gene>
    <name evidence="1" type="primary">dxr</name>
    <name type="ordered locus">CPE1694</name>
</gene>
<protein>
    <recommendedName>
        <fullName evidence="1">1-deoxy-D-xylulose 5-phosphate reductoisomerase</fullName>
        <shortName evidence="1">DXP reductoisomerase</shortName>
        <ecNumber evidence="1">1.1.1.267</ecNumber>
    </recommendedName>
    <alternativeName>
        <fullName evidence="1">1-deoxyxylulose-5-phosphate reductoisomerase</fullName>
    </alternativeName>
    <alternativeName>
        <fullName evidence="1">2-C-methyl-D-erythritol 4-phosphate synthase</fullName>
    </alternativeName>
</protein>
<sequence length="384" mass="43222">MKRISILGVTGSIGTQTLDVLRFHKEDFELVGITANRNIELTLDIIKEFSPKYVAINHEESYKKLVDLVKSEGLKCEVIYGMEGLVKVATLDEIDIVVTSVVGMIGLKPTVEAIRKGKDIALANKETLVVAGELVMREAKENGVKILPVDSEHSAIFQSLQGNAHNKIDKILLTASGGPFRGFTIEDLKSVTPERALKHPKWNMGQKISIDSSTLMNKGLEVIEAHWLFDCSYKDIEVVVHPQSIIHSMVQYTDGAVIAQLGVPDMKLPIQYALNYPNREGNISEKLDLFKIRELTFEKPDLDTFKCLKLAYEAGEKGKLMPTILNGANEVCVELFLNKKITYLQIPEIIEECMNTFDYNKEVTLDNVINLDKEVRQYIYEKYN</sequence>
<dbReference type="EC" id="1.1.1.267" evidence="1"/>
<dbReference type="EMBL" id="BA000016">
    <property type="protein sequence ID" value="BAB81400.1"/>
    <property type="molecule type" value="Genomic_DNA"/>
</dbReference>
<dbReference type="RefSeq" id="WP_011010567.1">
    <property type="nucleotide sequence ID" value="NC_003366.1"/>
</dbReference>
<dbReference type="SMR" id="Q8XJR1"/>
<dbReference type="STRING" id="195102.gene:10490958"/>
<dbReference type="KEGG" id="cpe:CPE1694"/>
<dbReference type="HOGENOM" id="CLU_035714_4_0_9"/>
<dbReference type="UniPathway" id="UPA00056">
    <property type="reaction ID" value="UER00092"/>
</dbReference>
<dbReference type="Proteomes" id="UP000000818">
    <property type="component" value="Chromosome"/>
</dbReference>
<dbReference type="GO" id="GO:0030604">
    <property type="term" value="F:1-deoxy-D-xylulose-5-phosphate reductoisomerase activity"/>
    <property type="evidence" value="ECO:0007669"/>
    <property type="project" value="UniProtKB-UniRule"/>
</dbReference>
<dbReference type="GO" id="GO:0030145">
    <property type="term" value="F:manganese ion binding"/>
    <property type="evidence" value="ECO:0007669"/>
    <property type="project" value="TreeGrafter"/>
</dbReference>
<dbReference type="GO" id="GO:0070402">
    <property type="term" value="F:NADPH binding"/>
    <property type="evidence" value="ECO:0007669"/>
    <property type="project" value="InterPro"/>
</dbReference>
<dbReference type="GO" id="GO:0051484">
    <property type="term" value="P:isopentenyl diphosphate biosynthetic process, methylerythritol 4-phosphate pathway involved in terpenoid biosynthetic process"/>
    <property type="evidence" value="ECO:0007669"/>
    <property type="project" value="TreeGrafter"/>
</dbReference>
<dbReference type="FunFam" id="3.40.50.720:FF:000045">
    <property type="entry name" value="1-deoxy-D-xylulose 5-phosphate reductoisomerase"/>
    <property type="match status" value="1"/>
</dbReference>
<dbReference type="Gene3D" id="1.10.1740.10">
    <property type="match status" value="1"/>
</dbReference>
<dbReference type="Gene3D" id="3.40.50.720">
    <property type="entry name" value="NAD(P)-binding Rossmann-like Domain"/>
    <property type="match status" value="1"/>
</dbReference>
<dbReference type="HAMAP" id="MF_00183">
    <property type="entry name" value="DXP_reductoisom"/>
    <property type="match status" value="1"/>
</dbReference>
<dbReference type="InterPro" id="IPR003821">
    <property type="entry name" value="DXP_reductoisomerase"/>
</dbReference>
<dbReference type="InterPro" id="IPR013644">
    <property type="entry name" value="DXP_reductoisomerase_C"/>
</dbReference>
<dbReference type="InterPro" id="IPR013512">
    <property type="entry name" value="DXP_reductoisomerase_N"/>
</dbReference>
<dbReference type="InterPro" id="IPR026877">
    <property type="entry name" value="DXPR_C"/>
</dbReference>
<dbReference type="InterPro" id="IPR036169">
    <property type="entry name" value="DXPR_C_sf"/>
</dbReference>
<dbReference type="InterPro" id="IPR036291">
    <property type="entry name" value="NAD(P)-bd_dom_sf"/>
</dbReference>
<dbReference type="NCBIfam" id="TIGR00243">
    <property type="entry name" value="Dxr"/>
    <property type="match status" value="1"/>
</dbReference>
<dbReference type="NCBIfam" id="NF009114">
    <property type="entry name" value="PRK12464.1"/>
    <property type="match status" value="1"/>
</dbReference>
<dbReference type="PANTHER" id="PTHR30525">
    <property type="entry name" value="1-DEOXY-D-XYLULOSE 5-PHOSPHATE REDUCTOISOMERASE"/>
    <property type="match status" value="1"/>
</dbReference>
<dbReference type="PANTHER" id="PTHR30525:SF0">
    <property type="entry name" value="1-DEOXY-D-XYLULOSE 5-PHOSPHATE REDUCTOISOMERASE, CHLOROPLASTIC"/>
    <property type="match status" value="1"/>
</dbReference>
<dbReference type="Pfam" id="PF08436">
    <property type="entry name" value="DXP_redisom_C"/>
    <property type="match status" value="1"/>
</dbReference>
<dbReference type="Pfam" id="PF02670">
    <property type="entry name" value="DXP_reductoisom"/>
    <property type="match status" value="1"/>
</dbReference>
<dbReference type="Pfam" id="PF13288">
    <property type="entry name" value="DXPR_C"/>
    <property type="match status" value="1"/>
</dbReference>
<dbReference type="PIRSF" id="PIRSF006205">
    <property type="entry name" value="Dxp_reductismrs"/>
    <property type="match status" value="1"/>
</dbReference>
<dbReference type="SUPFAM" id="SSF69055">
    <property type="entry name" value="1-deoxy-D-xylulose-5-phosphate reductoisomerase, C-terminal domain"/>
    <property type="match status" value="1"/>
</dbReference>
<dbReference type="SUPFAM" id="SSF55347">
    <property type="entry name" value="Glyceraldehyde-3-phosphate dehydrogenase-like, C-terminal domain"/>
    <property type="match status" value="1"/>
</dbReference>
<dbReference type="SUPFAM" id="SSF51735">
    <property type="entry name" value="NAD(P)-binding Rossmann-fold domains"/>
    <property type="match status" value="1"/>
</dbReference>
<proteinExistence type="inferred from homology"/>
<reference key="1">
    <citation type="journal article" date="2002" name="Proc. Natl. Acad. Sci. U.S.A.">
        <title>Complete genome sequence of Clostridium perfringens, an anaerobic flesh-eater.</title>
        <authorList>
            <person name="Shimizu T."/>
            <person name="Ohtani K."/>
            <person name="Hirakawa H."/>
            <person name="Ohshima K."/>
            <person name="Yamashita A."/>
            <person name="Shiba T."/>
            <person name="Ogasawara N."/>
            <person name="Hattori M."/>
            <person name="Kuhara S."/>
            <person name="Hayashi H."/>
        </authorList>
    </citation>
    <scope>NUCLEOTIDE SEQUENCE [LARGE SCALE GENOMIC DNA]</scope>
    <source>
        <strain>13 / Type A</strain>
    </source>
</reference>